<dbReference type="EC" id="2.7.4.25" evidence="1"/>
<dbReference type="EMBL" id="CP000660">
    <property type="protein sequence ID" value="ABP50927.1"/>
    <property type="molecule type" value="Genomic_DNA"/>
</dbReference>
<dbReference type="SMR" id="A4WKL0"/>
<dbReference type="STRING" id="340102.Pars_1364"/>
<dbReference type="KEGG" id="pas:Pars_1364"/>
<dbReference type="HOGENOM" id="CLU_079959_1_0_2"/>
<dbReference type="OrthoDB" id="31096at2157"/>
<dbReference type="PhylomeDB" id="A4WKL0"/>
<dbReference type="Proteomes" id="UP000001567">
    <property type="component" value="Chromosome"/>
</dbReference>
<dbReference type="GO" id="GO:0005737">
    <property type="term" value="C:cytoplasm"/>
    <property type="evidence" value="ECO:0007669"/>
    <property type="project" value="UniProtKB-SubCell"/>
</dbReference>
<dbReference type="GO" id="GO:0005524">
    <property type="term" value="F:ATP binding"/>
    <property type="evidence" value="ECO:0007669"/>
    <property type="project" value="UniProtKB-UniRule"/>
</dbReference>
<dbReference type="GO" id="GO:0036430">
    <property type="term" value="F:CMP kinase activity"/>
    <property type="evidence" value="ECO:0007669"/>
    <property type="project" value="RHEA"/>
</dbReference>
<dbReference type="GO" id="GO:0036431">
    <property type="term" value="F:dCMP kinase activity"/>
    <property type="evidence" value="ECO:0007669"/>
    <property type="project" value="RHEA"/>
</dbReference>
<dbReference type="GO" id="GO:0006220">
    <property type="term" value="P:pyrimidine nucleotide metabolic process"/>
    <property type="evidence" value="ECO:0007669"/>
    <property type="project" value="UniProtKB-UniRule"/>
</dbReference>
<dbReference type="CDD" id="cd02020">
    <property type="entry name" value="CMPK"/>
    <property type="match status" value="1"/>
</dbReference>
<dbReference type="Gene3D" id="3.40.50.300">
    <property type="entry name" value="P-loop containing nucleotide triphosphate hydrolases"/>
    <property type="match status" value="1"/>
</dbReference>
<dbReference type="HAMAP" id="MF_00239">
    <property type="entry name" value="Cytidyl_kinase_type2"/>
    <property type="match status" value="1"/>
</dbReference>
<dbReference type="InterPro" id="IPR011892">
    <property type="entry name" value="Cyt_kin_arch"/>
</dbReference>
<dbReference type="InterPro" id="IPR011994">
    <property type="entry name" value="Cytidylate_kinase_dom"/>
</dbReference>
<dbReference type="InterPro" id="IPR027417">
    <property type="entry name" value="P-loop_NTPase"/>
</dbReference>
<dbReference type="NCBIfam" id="TIGR02173">
    <property type="entry name" value="cyt_kin_arch"/>
    <property type="match status" value="1"/>
</dbReference>
<dbReference type="Pfam" id="PF13189">
    <property type="entry name" value="Cytidylate_kin2"/>
    <property type="match status" value="1"/>
</dbReference>
<dbReference type="SUPFAM" id="SSF52540">
    <property type="entry name" value="P-loop containing nucleoside triphosphate hydrolases"/>
    <property type="match status" value="1"/>
</dbReference>
<sequence length="184" mass="20541">MVVVAVSGQPGSGKTTIAREIARVLKVPLVSSGTLFREMATKMGIDFLEFHKYAESNPEIDKSVDTAAVERAKAGNVVLEGHLTAWVVRPYADVCIYLKASPEVRARRVALRDGKSLEEAYREVTEREELNRRRYLAIYGIDIKDLSIFDLVVDTSFLSVNDAVRISVDFTCTTLSFKYSKKVC</sequence>
<reference key="1">
    <citation type="submission" date="2007-04" db="EMBL/GenBank/DDBJ databases">
        <title>Complete sequence of Pyrobaculum arsenaticum DSM 13514.</title>
        <authorList>
            <consortium name="US DOE Joint Genome Institute"/>
            <person name="Copeland A."/>
            <person name="Lucas S."/>
            <person name="Lapidus A."/>
            <person name="Barry K."/>
            <person name="Glavina del Rio T."/>
            <person name="Dalin E."/>
            <person name="Tice H."/>
            <person name="Pitluck S."/>
            <person name="Chain P."/>
            <person name="Malfatti S."/>
            <person name="Shin M."/>
            <person name="Vergez L."/>
            <person name="Schmutz J."/>
            <person name="Larimer F."/>
            <person name="Land M."/>
            <person name="Hauser L."/>
            <person name="Kyrpides N."/>
            <person name="Mikhailova N."/>
            <person name="Cozen A.E."/>
            <person name="Fitz-Gibbon S.T."/>
            <person name="House C.H."/>
            <person name="Saltikov C."/>
            <person name="Lowe T.M."/>
            <person name="Richardson P."/>
        </authorList>
    </citation>
    <scope>NUCLEOTIDE SEQUENCE [LARGE SCALE GENOMIC DNA]</scope>
    <source>
        <strain>ATCC 700994 / DSM 13514 / JCM 11321 / PZ6</strain>
    </source>
</reference>
<comment type="catalytic activity">
    <reaction evidence="1">
        <text>CMP + ATP = CDP + ADP</text>
        <dbReference type="Rhea" id="RHEA:11600"/>
        <dbReference type="ChEBI" id="CHEBI:30616"/>
        <dbReference type="ChEBI" id="CHEBI:58069"/>
        <dbReference type="ChEBI" id="CHEBI:60377"/>
        <dbReference type="ChEBI" id="CHEBI:456216"/>
        <dbReference type="EC" id="2.7.4.25"/>
    </reaction>
</comment>
<comment type="catalytic activity">
    <reaction evidence="1">
        <text>dCMP + ATP = dCDP + ADP</text>
        <dbReference type="Rhea" id="RHEA:25094"/>
        <dbReference type="ChEBI" id="CHEBI:30616"/>
        <dbReference type="ChEBI" id="CHEBI:57566"/>
        <dbReference type="ChEBI" id="CHEBI:58593"/>
        <dbReference type="ChEBI" id="CHEBI:456216"/>
        <dbReference type="EC" id="2.7.4.25"/>
    </reaction>
</comment>
<comment type="subcellular location">
    <subcellularLocation>
        <location evidence="1">Cytoplasm</location>
    </subcellularLocation>
</comment>
<comment type="similarity">
    <text evidence="1">Belongs to the cytidylate kinase family. Type 2 subfamily.</text>
</comment>
<evidence type="ECO:0000255" key="1">
    <source>
        <dbReference type="HAMAP-Rule" id="MF_00239"/>
    </source>
</evidence>
<organism>
    <name type="scientific">Pyrobaculum arsenaticum (strain DSM 13514 / JCM 11321 / PZ6)</name>
    <dbReference type="NCBI Taxonomy" id="340102"/>
    <lineage>
        <taxon>Archaea</taxon>
        <taxon>Thermoproteota</taxon>
        <taxon>Thermoprotei</taxon>
        <taxon>Thermoproteales</taxon>
        <taxon>Thermoproteaceae</taxon>
        <taxon>Pyrobaculum</taxon>
    </lineage>
</organism>
<protein>
    <recommendedName>
        <fullName evidence="1">Cytidylate kinase</fullName>
        <shortName evidence="1">CK</shortName>
        <ecNumber evidence="1">2.7.4.25</ecNumber>
    </recommendedName>
    <alternativeName>
        <fullName evidence="1">Cytidine monophosphate kinase</fullName>
        <shortName evidence="1">CMP kinase</shortName>
    </alternativeName>
</protein>
<name>KCY_PYRAR</name>
<feature type="chain" id="PRO_1000005683" description="Cytidylate kinase">
    <location>
        <begin position="1"/>
        <end position="184"/>
    </location>
</feature>
<feature type="binding site" evidence="1">
    <location>
        <begin position="8"/>
        <end position="16"/>
    </location>
    <ligand>
        <name>ATP</name>
        <dbReference type="ChEBI" id="CHEBI:30616"/>
    </ligand>
</feature>
<accession>A4WKL0</accession>
<keyword id="KW-0067">ATP-binding</keyword>
<keyword id="KW-0963">Cytoplasm</keyword>
<keyword id="KW-0418">Kinase</keyword>
<keyword id="KW-0547">Nucleotide-binding</keyword>
<keyword id="KW-0808">Transferase</keyword>
<proteinExistence type="inferred from homology"/>
<gene>
    <name evidence="1" type="primary">cmk</name>
    <name type="ordered locus">Pars_1364</name>
</gene>